<feature type="chain" id="PRO_0000063195" description="Purine nucleoside phosphorylase">
    <location>
        <begin position="1"/>
        <end position="236"/>
    </location>
</feature>
<feature type="binding site" evidence="1">
    <location>
        <position position="5"/>
    </location>
    <ligand>
        <name>a purine D-ribonucleoside</name>
        <dbReference type="ChEBI" id="CHEBI:142355"/>
        <note>ligand shared between dimeric partners</note>
    </ligand>
</feature>
<feature type="binding site" description="in other chain" evidence="1 6 11">
    <location>
        <position position="21"/>
    </location>
    <ligand>
        <name>phosphate</name>
        <dbReference type="ChEBI" id="CHEBI:43474"/>
        <note>ligand shared between dimeric partners</note>
    </ligand>
</feature>
<feature type="binding site" description="in other chain" evidence="1 6 11">
    <location>
        <position position="25"/>
    </location>
    <ligand>
        <name>phosphate</name>
        <dbReference type="ChEBI" id="CHEBI:43474"/>
        <note>ligand shared between dimeric partners</note>
    </ligand>
</feature>
<feature type="binding site" evidence="1 11">
    <location>
        <position position="43"/>
    </location>
    <ligand>
        <name>phosphate</name>
        <dbReference type="ChEBI" id="CHEBI:43474"/>
        <note>ligand shared between dimeric partners</note>
    </ligand>
</feature>
<feature type="binding site" description="in other chain" evidence="1 6 11">
    <location>
        <begin position="86"/>
        <end position="89"/>
    </location>
    <ligand>
        <name>phosphate</name>
        <dbReference type="ChEBI" id="CHEBI:43474"/>
        <note>ligand shared between dimeric partners</note>
    </ligand>
</feature>
<feature type="binding site" description="in other chain" evidence="1">
    <location>
        <position position="163"/>
    </location>
    <ligand>
        <name>a purine D-ribonucleoside</name>
        <dbReference type="ChEBI" id="CHEBI:142355"/>
        <note>ligand shared between dimeric partners</note>
    </ligand>
</feature>
<feature type="binding site" description="in other chain" evidence="1 7 12">
    <location>
        <begin position="180"/>
        <end position="182"/>
    </location>
    <ligand>
        <name>a purine D-ribonucleoside</name>
        <dbReference type="ChEBI" id="CHEBI:142355"/>
        <note>ligand shared between dimeric partners</note>
    </ligand>
</feature>
<feature type="binding site" description="in other chain" evidence="1">
    <location>
        <begin position="204"/>
        <end position="205"/>
    </location>
    <ligand>
        <name>a purine D-ribonucleoside</name>
        <dbReference type="ChEBI" id="CHEBI:142355"/>
        <note>ligand shared between dimeric partners</note>
    </ligand>
</feature>
<feature type="disulfide bond" description="Interchain" evidence="1 6 7 8 9 10 11 12 13 14">
    <location>
        <position position="125"/>
    </location>
</feature>
<feature type="strand" evidence="15">
    <location>
        <begin position="4"/>
        <end position="6"/>
    </location>
</feature>
<feature type="strand" evidence="16">
    <location>
        <begin position="15"/>
        <end position="21"/>
    </location>
</feature>
<feature type="helix" evidence="16">
    <location>
        <begin position="23"/>
        <end position="29"/>
    </location>
</feature>
<feature type="helix" evidence="16">
    <location>
        <begin position="30"/>
        <end position="32"/>
    </location>
</feature>
<feature type="strand" evidence="16">
    <location>
        <begin position="33"/>
        <end position="40"/>
    </location>
</feature>
<feature type="helix" evidence="16">
    <location>
        <begin position="42"/>
        <end position="44"/>
    </location>
</feature>
<feature type="strand" evidence="16">
    <location>
        <begin position="47"/>
        <end position="52"/>
    </location>
</feature>
<feature type="strand" evidence="16">
    <location>
        <begin position="55"/>
        <end position="61"/>
    </location>
</feature>
<feature type="helix" evidence="16">
    <location>
        <begin position="66"/>
        <end position="78"/>
    </location>
</feature>
<feature type="strand" evidence="16">
    <location>
        <begin position="83"/>
        <end position="92"/>
    </location>
</feature>
<feature type="strand" evidence="16">
    <location>
        <begin position="102"/>
        <end position="110"/>
    </location>
</feature>
<feature type="helix" evidence="16">
    <location>
        <begin position="114"/>
        <end position="120"/>
    </location>
</feature>
<feature type="helix" evidence="16">
    <location>
        <begin position="132"/>
        <end position="144"/>
    </location>
</feature>
<feature type="strand" evidence="16">
    <location>
        <begin position="149"/>
        <end position="156"/>
    </location>
</feature>
<feature type="helix" evidence="17">
    <location>
        <begin position="160"/>
        <end position="162"/>
    </location>
</feature>
<feature type="helix" evidence="16">
    <location>
        <begin position="167"/>
        <end position="172"/>
    </location>
</feature>
<feature type="turn" evidence="16">
    <location>
        <begin position="173"/>
        <end position="175"/>
    </location>
</feature>
<feature type="strand" evidence="16">
    <location>
        <begin position="176"/>
        <end position="182"/>
    </location>
</feature>
<feature type="helix" evidence="16">
    <location>
        <begin position="183"/>
        <end position="193"/>
    </location>
</feature>
<feature type="strand" evidence="16">
    <location>
        <begin position="196"/>
        <end position="206"/>
    </location>
</feature>
<feature type="helix" evidence="16">
    <location>
        <begin position="218"/>
        <end position="234"/>
    </location>
</feature>
<proteinExistence type="evidence at protein level"/>
<accession>P50389</accession>
<gene>
    <name type="ordered locus">SSO2706</name>
</gene>
<comment type="function">
    <text evidence="2 3">Cleavage of guanosine or inosine to respective bases and sugar-1-phosphate molecules. Cleaves inosine, guanosine, and adenosine with a better efficiency than MTA.</text>
</comment>
<comment type="catalytic activity">
    <reaction evidence="2 3">
        <text>S-methyl-5'-thioadenosine + phosphate = 5-(methylsulfanyl)-alpha-D-ribose 1-phosphate + adenine</text>
        <dbReference type="Rhea" id="RHEA:11852"/>
        <dbReference type="ChEBI" id="CHEBI:16708"/>
        <dbReference type="ChEBI" id="CHEBI:17509"/>
        <dbReference type="ChEBI" id="CHEBI:43474"/>
        <dbReference type="ChEBI" id="CHEBI:58533"/>
        <dbReference type="EC" id="2.4.2.28"/>
    </reaction>
</comment>
<comment type="catalytic activity">
    <reaction evidence="2 3">
        <text>a purine D-ribonucleoside + phosphate = a purine nucleobase + alpha-D-ribose 1-phosphate</text>
        <dbReference type="Rhea" id="RHEA:19805"/>
        <dbReference type="ChEBI" id="CHEBI:26386"/>
        <dbReference type="ChEBI" id="CHEBI:43474"/>
        <dbReference type="ChEBI" id="CHEBI:57720"/>
        <dbReference type="ChEBI" id="CHEBI:142355"/>
        <dbReference type="EC" id="2.4.2.1"/>
    </reaction>
</comment>
<comment type="catalytic activity">
    <reaction evidence="2">
        <text>a purine 2'-deoxy-D-ribonucleoside + phosphate = a purine nucleobase + 2-deoxy-alpha-D-ribose 1-phosphate</text>
        <dbReference type="Rhea" id="RHEA:36431"/>
        <dbReference type="ChEBI" id="CHEBI:26386"/>
        <dbReference type="ChEBI" id="CHEBI:43474"/>
        <dbReference type="ChEBI" id="CHEBI:57259"/>
        <dbReference type="ChEBI" id="CHEBI:142361"/>
        <dbReference type="EC" id="2.4.2.1"/>
    </reaction>
</comment>
<comment type="biophysicochemical properties">
    <kinetics>
        <KM evidence="2">154 uM for S-methyl-5'-thioadenosine</KM>
        <KM evidence="2">25.4 uM for adenosine</KM>
        <KM evidence="2">84 uM for inosine</KM>
        <KM evidence="2">113.6 uM for guanosine</KM>
    </kinetics>
    <temperatureDependence>
        <text evidence="2">Optimum temperature is 120 degrees Celsius. Highly thermostable.</text>
    </temperatureDependence>
</comment>
<comment type="pathway">
    <text>Purine metabolism; purine nucleoside salvage.</text>
</comment>
<comment type="subunit">
    <text evidence="1 3">Homohexamer; disulfide-linked. Trimer of homodimers, with three symmetric intersubunit disulfide bonds linking the dimers to one another.</text>
</comment>
<comment type="similarity">
    <text evidence="5">Belongs to the PNP/UDP phosphorylase family.</text>
</comment>
<name>PNPH_SACS2</name>
<reference key="1">
    <citation type="journal article" date="1996" name="Eur. J. Biochem.">
        <title>Extremely thermophilic and thermostable 5'-methylthioadenosine phosphorylase from the archaeon Sulfolobus solfataricus. Gene cloning and amino acid sequence determination.</title>
        <authorList>
            <person name="Cacciapuoti G."/>
            <person name="Porcelli M."/>
            <person name="Bertoldo C."/>
            <person name="Fusco S."/>
            <person name="De Rosa M."/>
            <person name="Zappia V."/>
        </authorList>
    </citation>
    <scope>NUCLEOTIDE SEQUENCE [GENOMIC DNA]</scope>
    <source>
        <strain>ATCC 35092 / DSM 1617 / JCM 11322 / P2</strain>
    </source>
</reference>
<reference key="2">
    <citation type="journal article" date="2001" name="Proc. Natl. Acad. Sci. U.S.A.">
        <title>The complete genome of the crenarchaeon Sulfolobus solfataricus P2.</title>
        <authorList>
            <person name="She Q."/>
            <person name="Singh R.K."/>
            <person name="Confalonieri F."/>
            <person name="Zivanovic Y."/>
            <person name="Allard G."/>
            <person name="Awayez M.J."/>
            <person name="Chan-Weiher C.C.-Y."/>
            <person name="Clausen I.G."/>
            <person name="Curtis B.A."/>
            <person name="De Moors A."/>
            <person name="Erauso G."/>
            <person name="Fletcher C."/>
            <person name="Gordon P.M.K."/>
            <person name="Heikamp-de Jong I."/>
            <person name="Jeffries A.C."/>
            <person name="Kozera C.J."/>
            <person name="Medina N."/>
            <person name="Peng X."/>
            <person name="Thi-Ngoc H.P."/>
            <person name="Redder P."/>
            <person name="Schenk M.E."/>
            <person name="Theriault C."/>
            <person name="Tolstrup N."/>
            <person name="Charlebois R.L."/>
            <person name="Doolittle W.F."/>
            <person name="Duguet M."/>
            <person name="Gaasterland T."/>
            <person name="Garrett R.A."/>
            <person name="Ragan M.A."/>
            <person name="Sensen C.W."/>
            <person name="Van der Oost J."/>
        </authorList>
    </citation>
    <scope>NUCLEOTIDE SEQUENCE [LARGE SCALE GENOMIC DNA]</scope>
    <source>
        <strain>ATCC 35092 / DSM 1617 / JCM 11322 / P2</strain>
    </source>
</reference>
<reference key="3">
    <citation type="journal article" date="1994" name="J. Biol. Chem.">
        <title>Purification and characterization of extremely thermophilic and thermostable 5'-methylthioadenosine phosphorylase from the archaeon Sulfolobus solfataricus. Purine nucleoside phosphorylase activity and evidence for intersubunit disulfide bonds.</title>
        <authorList>
            <person name="Cacciapuoti G."/>
            <person name="Porcelli M."/>
            <person name="Bertoldo C."/>
            <person name="de Rosa M."/>
            <person name="Zappia V."/>
        </authorList>
    </citation>
    <scope>PROTEIN SEQUENCE OF 1-26</scope>
    <scope>FUNCTION</scope>
    <scope>SUBUNIT</scope>
    <scope>CATALYTIC ACTIVITY</scope>
</reference>
<reference key="4">
    <citation type="journal article" date="2005" name="FEBS J.">
        <title>A novel hyperthermostable 5'-deoxy-5'-methylthioadenosine phosphorylase from the archaeon Sulfolobus solfataricus.</title>
        <authorList>
            <person name="Cacciapuoti G."/>
            <person name="Forte S."/>
            <person name="Moretti M.A."/>
            <person name="Brio A."/>
            <person name="Zappia V."/>
            <person name="Porcelli M."/>
        </authorList>
    </citation>
    <scope>FUNCTION</scope>
    <scope>CATALYTIC ACTIVITY</scope>
    <scope>BIOPHYSICOCHEMICAL PROPERTIES</scope>
</reference>
<reference key="5">
    <citation type="journal article" date="2001" name="J. Biol. Chem.">
        <title>Three-dimensional structure of a hyperthermophilic 5'-deoxy-5'-methylthioadenosine phosphorylase from Sulfolobus solfataricus.</title>
        <authorList>
            <person name="Appleby T.C."/>
            <person name="Mathews I.I."/>
            <person name="Porcelli M."/>
            <person name="Cacciapuoti G."/>
            <person name="Ealick S.E."/>
        </authorList>
    </citation>
    <scope>X-RAY CRYSTALLOGRAPHY (1.60 ANGSTROMS) IN COMPLEX WITH SUBSTRATES AND SUBSTRATE ANALOGS</scope>
    <scope>DISULFIDE BOND</scope>
</reference>
<dbReference type="EC" id="2.4.2.1" evidence="2"/>
<dbReference type="EC" id="2.4.2.28" evidence="2 3"/>
<dbReference type="EMBL" id="Z50181">
    <property type="protein sequence ID" value="CAA90560.1"/>
    <property type="molecule type" value="Genomic_DNA"/>
</dbReference>
<dbReference type="EMBL" id="AE006641">
    <property type="protein sequence ID" value="AAK42818.1"/>
    <property type="molecule type" value="Genomic_DNA"/>
</dbReference>
<dbReference type="PIR" id="S58291">
    <property type="entry name" value="S58291"/>
</dbReference>
<dbReference type="RefSeq" id="WP_009988635.1">
    <property type="nucleotide sequence ID" value="NC_002754.1"/>
</dbReference>
<dbReference type="PDB" id="1JDS">
    <property type="method" value="X-ray"/>
    <property type="resolution" value="1.80 A"/>
    <property type="chains" value="A/B/C/D/E/F=1-236"/>
</dbReference>
<dbReference type="PDB" id="1JDT">
    <property type="method" value="X-ray"/>
    <property type="resolution" value="2.00 A"/>
    <property type="chains" value="A/B/C=1-236"/>
</dbReference>
<dbReference type="PDB" id="1JDU">
    <property type="method" value="X-ray"/>
    <property type="resolution" value="2.50 A"/>
    <property type="chains" value="A/B/C=1-236"/>
</dbReference>
<dbReference type="PDB" id="1JDV">
    <property type="method" value="X-ray"/>
    <property type="resolution" value="2.00 A"/>
    <property type="chains" value="A/B/C/D/E/F=1-236"/>
</dbReference>
<dbReference type="PDB" id="1JDZ">
    <property type="method" value="X-ray"/>
    <property type="resolution" value="2.00 A"/>
    <property type="chains" value="A/B/C=1-236"/>
</dbReference>
<dbReference type="PDB" id="1JE0">
    <property type="method" value="X-ray"/>
    <property type="resolution" value="1.60 A"/>
    <property type="chains" value="A/B/C=1-236"/>
</dbReference>
<dbReference type="PDB" id="1JE1">
    <property type="method" value="X-ray"/>
    <property type="resolution" value="1.80 A"/>
    <property type="chains" value="A/B/C/D/E/F=1-236"/>
</dbReference>
<dbReference type="PDB" id="1JP7">
    <property type="method" value="X-ray"/>
    <property type="resolution" value="1.80 A"/>
    <property type="chains" value="A/B/C=1-236"/>
</dbReference>
<dbReference type="PDB" id="1JPV">
    <property type="method" value="X-ray"/>
    <property type="resolution" value="1.80 A"/>
    <property type="chains" value="A/B/C=1-236"/>
</dbReference>
<dbReference type="PDBsum" id="1JDS"/>
<dbReference type="PDBsum" id="1JDT"/>
<dbReference type="PDBsum" id="1JDU"/>
<dbReference type="PDBsum" id="1JDV"/>
<dbReference type="PDBsum" id="1JDZ"/>
<dbReference type="PDBsum" id="1JE0"/>
<dbReference type="PDBsum" id="1JE1"/>
<dbReference type="PDBsum" id="1JP7"/>
<dbReference type="PDBsum" id="1JPV"/>
<dbReference type="SMR" id="P50389"/>
<dbReference type="FunCoup" id="P50389">
    <property type="interactions" value="22"/>
</dbReference>
<dbReference type="STRING" id="273057.SSO2706"/>
<dbReference type="ChEMBL" id="CHEMBL3751658"/>
<dbReference type="PaxDb" id="273057-SSO2706"/>
<dbReference type="EnsemblBacteria" id="AAK42818">
    <property type="protein sequence ID" value="AAK42818"/>
    <property type="gene ID" value="SSO2706"/>
</dbReference>
<dbReference type="KEGG" id="sso:SSO2706"/>
<dbReference type="PATRIC" id="fig|273057.12.peg.2787"/>
<dbReference type="eggNOG" id="arCOG01324">
    <property type="taxonomic scope" value="Archaea"/>
</dbReference>
<dbReference type="HOGENOM" id="CLU_068457_0_1_2"/>
<dbReference type="InParanoid" id="P50389"/>
<dbReference type="PhylomeDB" id="P50389"/>
<dbReference type="BRENDA" id="2.4.2.28">
    <property type="organism ID" value="6163"/>
</dbReference>
<dbReference type="UniPathway" id="UPA00606"/>
<dbReference type="EvolutionaryTrace" id="P50389"/>
<dbReference type="Proteomes" id="UP000001974">
    <property type="component" value="Chromosome"/>
</dbReference>
<dbReference type="GO" id="GO:0005829">
    <property type="term" value="C:cytosol"/>
    <property type="evidence" value="ECO:0000318"/>
    <property type="project" value="GO_Central"/>
</dbReference>
<dbReference type="GO" id="GO:0017061">
    <property type="term" value="F:S-methyl-5-thioadenosine phosphorylase activity"/>
    <property type="evidence" value="ECO:0007669"/>
    <property type="project" value="UniProtKB-EC"/>
</dbReference>
<dbReference type="GO" id="GO:0009164">
    <property type="term" value="P:nucleoside catabolic process"/>
    <property type="evidence" value="ECO:0007669"/>
    <property type="project" value="UniProtKB-ARBA"/>
</dbReference>
<dbReference type="CDD" id="cd17764">
    <property type="entry name" value="MTAP_SsMTAPI_like"/>
    <property type="match status" value="1"/>
</dbReference>
<dbReference type="Gene3D" id="3.40.50.1580">
    <property type="entry name" value="Nucleoside phosphorylase domain"/>
    <property type="match status" value="1"/>
</dbReference>
<dbReference type="InterPro" id="IPR018016">
    <property type="entry name" value="Nucleoside_phosphorylase_CS"/>
</dbReference>
<dbReference type="InterPro" id="IPR000845">
    <property type="entry name" value="Nucleoside_phosphorylase_d"/>
</dbReference>
<dbReference type="InterPro" id="IPR035994">
    <property type="entry name" value="Nucleoside_phosphorylase_sf"/>
</dbReference>
<dbReference type="PANTHER" id="PTHR43691:SF11">
    <property type="entry name" value="FI09636P-RELATED"/>
    <property type="match status" value="1"/>
</dbReference>
<dbReference type="PANTHER" id="PTHR43691">
    <property type="entry name" value="URIDINE PHOSPHORYLASE"/>
    <property type="match status" value="1"/>
</dbReference>
<dbReference type="Pfam" id="PF01048">
    <property type="entry name" value="PNP_UDP_1"/>
    <property type="match status" value="1"/>
</dbReference>
<dbReference type="SUPFAM" id="SSF53167">
    <property type="entry name" value="Purine and uridine phosphorylases"/>
    <property type="match status" value="1"/>
</dbReference>
<dbReference type="PROSITE" id="PS01232">
    <property type="entry name" value="PNP_UDP_1"/>
    <property type="match status" value="1"/>
</dbReference>
<sequence>MNPVHILAKKGEVAERVLVVGDPGRARLLSTLLQNPKLTNENRGFLVYTGKYNGETVSIATHGIGGPSIAIVLEELAMLGANVFIRYGTTGALVPYINLGEYIIVTGASYNQGGLFYQYLRDNACVASTPDFELTNKLVTSFSKRNLKYYVGNVFSSDAFYAEDEEFVKKWSSRGNIAVEMECATLFTLSKVKGWKSATVLVVSDNLAKGGIWITKEELEKSVMDGAKAVLDTLTS</sequence>
<keyword id="KW-0002">3D-structure</keyword>
<keyword id="KW-0903">Direct protein sequencing</keyword>
<keyword id="KW-1015">Disulfide bond</keyword>
<keyword id="KW-0328">Glycosyltransferase</keyword>
<keyword id="KW-1185">Reference proteome</keyword>
<keyword id="KW-0808">Transferase</keyword>
<organism>
    <name type="scientific">Saccharolobus solfataricus (strain ATCC 35092 / DSM 1617 / JCM 11322 / P2)</name>
    <name type="common">Sulfolobus solfataricus</name>
    <dbReference type="NCBI Taxonomy" id="273057"/>
    <lineage>
        <taxon>Archaea</taxon>
        <taxon>Thermoproteota</taxon>
        <taxon>Thermoprotei</taxon>
        <taxon>Sulfolobales</taxon>
        <taxon>Sulfolobaceae</taxon>
        <taxon>Saccharolobus</taxon>
    </lineage>
</organism>
<protein>
    <recommendedName>
        <fullName>Purine nucleoside phosphorylase</fullName>
        <shortName>PNP</shortName>
        <ecNumber evidence="2">2.4.2.1</ecNumber>
    </recommendedName>
    <alternativeName>
        <fullName evidence="4">5'-methylthioadenosine phosphorylase I</fullName>
        <shortName>MTA phosphorylase I</shortName>
        <shortName>MTAPI</shortName>
        <ecNumber evidence="2 3">2.4.2.28</ecNumber>
    </alternativeName>
</protein>
<evidence type="ECO:0000269" key="1">
    <source>
    </source>
</evidence>
<evidence type="ECO:0000269" key="2">
    <source>
    </source>
</evidence>
<evidence type="ECO:0000269" key="3">
    <source>
    </source>
</evidence>
<evidence type="ECO:0000303" key="4">
    <source>
    </source>
</evidence>
<evidence type="ECO:0000305" key="5"/>
<evidence type="ECO:0007744" key="6">
    <source>
        <dbReference type="PDB" id="1JDS"/>
    </source>
</evidence>
<evidence type="ECO:0007744" key="7">
    <source>
        <dbReference type="PDB" id="1JDT"/>
    </source>
</evidence>
<evidence type="ECO:0007744" key="8">
    <source>
        <dbReference type="PDB" id="1JDU"/>
    </source>
</evidence>
<evidence type="ECO:0007744" key="9">
    <source>
        <dbReference type="PDB" id="1JDV"/>
    </source>
</evidence>
<evidence type="ECO:0007744" key="10">
    <source>
        <dbReference type="PDB" id="1JDZ"/>
    </source>
</evidence>
<evidence type="ECO:0007744" key="11">
    <source>
        <dbReference type="PDB" id="1JE0"/>
    </source>
</evidence>
<evidence type="ECO:0007744" key="12">
    <source>
        <dbReference type="PDB" id="1JE1"/>
    </source>
</evidence>
<evidence type="ECO:0007744" key="13">
    <source>
        <dbReference type="PDB" id="1JP7"/>
    </source>
</evidence>
<evidence type="ECO:0007744" key="14">
    <source>
        <dbReference type="PDB" id="1JPV"/>
    </source>
</evidence>
<evidence type="ECO:0007829" key="15">
    <source>
        <dbReference type="PDB" id="1JDV"/>
    </source>
</evidence>
<evidence type="ECO:0007829" key="16">
    <source>
        <dbReference type="PDB" id="1JE0"/>
    </source>
</evidence>
<evidence type="ECO:0007829" key="17">
    <source>
        <dbReference type="PDB" id="1JE1"/>
    </source>
</evidence>